<protein>
    <recommendedName>
        <fullName evidence="1">UPF0305 protein MmarC6_0221</fullName>
    </recommendedName>
</protein>
<evidence type="ECO:0000255" key="1">
    <source>
        <dbReference type="HAMAP-Rule" id="MF_00763"/>
    </source>
</evidence>
<proteinExistence type="inferred from homology"/>
<sequence length="162" mass="19049">MKSRNFFSKLKEESYDVGIFDLMNAKVYLEKDLTYLPEDYKKGYLEDFFTFFPEVLREIKNKTEEEIEDFEINEEEIKKVDSRICSMGSIGASRDSYEKLVKTVINYLIFINKRPLHALTTRFPGGKQIIEKNGNYYCPIKNAQSNELSICEFCICKDLNEL</sequence>
<gene>
    <name type="ordered locus">MmarC6_0221</name>
</gene>
<accession>A9A7B8</accession>
<feature type="chain" id="PRO_1000200698" description="UPF0305 protein MmarC6_0221">
    <location>
        <begin position="1"/>
        <end position="162"/>
    </location>
</feature>
<reference key="1">
    <citation type="submission" date="2007-10" db="EMBL/GenBank/DDBJ databases">
        <title>Complete sequence of Methanococcus maripaludis C6.</title>
        <authorList>
            <consortium name="US DOE Joint Genome Institute"/>
            <person name="Copeland A."/>
            <person name="Lucas S."/>
            <person name="Lapidus A."/>
            <person name="Barry K."/>
            <person name="Glavina del Rio T."/>
            <person name="Dalin E."/>
            <person name="Tice H."/>
            <person name="Pitluck S."/>
            <person name="Clum A."/>
            <person name="Schmutz J."/>
            <person name="Larimer F."/>
            <person name="Land M."/>
            <person name="Hauser L."/>
            <person name="Kyrpides N."/>
            <person name="Mikhailova N."/>
            <person name="Sieprawska-Lupa M."/>
            <person name="Whitman W.B."/>
            <person name="Richardson P."/>
        </authorList>
    </citation>
    <scope>NUCLEOTIDE SEQUENCE [LARGE SCALE GENOMIC DNA]</scope>
    <source>
        <strain>C6 / ATCC BAA-1332</strain>
    </source>
</reference>
<comment type="similarity">
    <text evidence="1">Belongs to the UPF0305 family.</text>
</comment>
<dbReference type="EMBL" id="CP000867">
    <property type="protein sequence ID" value="ABX01042.1"/>
    <property type="molecule type" value="Genomic_DNA"/>
</dbReference>
<dbReference type="STRING" id="444158.MmarC6_0221"/>
<dbReference type="KEGG" id="mmx:MmarC6_0221"/>
<dbReference type="eggNOG" id="arCOG03215">
    <property type="taxonomic scope" value="Archaea"/>
</dbReference>
<dbReference type="HOGENOM" id="CLU_089549_1_0_2"/>
<dbReference type="OrthoDB" id="81482at2157"/>
<dbReference type="PhylomeDB" id="A9A7B8"/>
<dbReference type="HAMAP" id="MF_00763">
    <property type="entry name" value="UPF0305"/>
    <property type="match status" value="1"/>
</dbReference>
<dbReference type="InterPro" id="IPR019215">
    <property type="entry name" value="DUF2115"/>
</dbReference>
<dbReference type="NCBIfam" id="NF002174">
    <property type="entry name" value="PRK01022.1-1"/>
    <property type="match status" value="1"/>
</dbReference>
<dbReference type="Pfam" id="PF09888">
    <property type="entry name" value="DUF2115"/>
    <property type="match status" value="1"/>
</dbReference>
<dbReference type="PIRSF" id="PIRSF004959">
    <property type="entry name" value="UCP004959"/>
    <property type="match status" value="1"/>
</dbReference>
<organism>
    <name type="scientific">Methanococcus maripaludis (strain C6 / ATCC BAA-1332)</name>
    <dbReference type="NCBI Taxonomy" id="444158"/>
    <lineage>
        <taxon>Archaea</taxon>
        <taxon>Methanobacteriati</taxon>
        <taxon>Methanobacteriota</taxon>
        <taxon>Methanomada group</taxon>
        <taxon>Methanococci</taxon>
        <taxon>Methanococcales</taxon>
        <taxon>Methanococcaceae</taxon>
        <taxon>Methanococcus</taxon>
    </lineage>
</organism>
<name>Y221_METM6</name>